<dbReference type="EC" id="4.2.1.24"/>
<dbReference type="EMBL" id="X92402">
    <property type="protein sequence ID" value="CAA63139.1"/>
    <property type="molecule type" value="mRNA"/>
</dbReference>
<dbReference type="PIR" id="T04472">
    <property type="entry name" value="T04472"/>
</dbReference>
<dbReference type="SMR" id="Q42836"/>
<dbReference type="UniPathway" id="UPA00251">
    <property type="reaction ID" value="UER00318"/>
</dbReference>
<dbReference type="ExpressionAtlas" id="Q42836">
    <property type="expression patterns" value="baseline and differential"/>
</dbReference>
<dbReference type="GO" id="GO:0009507">
    <property type="term" value="C:chloroplast"/>
    <property type="evidence" value="ECO:0007669"/>
    <property type="project" value="UniProtKB-SubCell"/>
</dbReference>
<dbReference type="GO" id="GO:0005829">
    <property type="term" value="C:cytosol"/>
    <property type="evidence" value="ECO:0007669"/>
    <property type="project" value="TreeGrafter"/>
</dbReference>
<dbReference type="GO" id="GO:0004655">
    <property type="term" value="F:porphobilinogen synthase activity"/>
    <property type="evidence" value="ECO:0007669"/>
    <property type="project" value="UniProtKB-EC"/>
</dbReference>
<dbReference type="GO" id="GO:0008270">
    <property type="term" value="F:zinc ion binding"/>
    <property type="evidence" value="ECO:0007669"/>
    <property type="project" value="TreeGrafter"/>
</dbReference>
<dbReference type="GO" id="GO:0015995">
    <property type="term" value="P:chlorophyll biosynthetic process"/>
    <property type="evidence" value="ECO:0007669"/>
    <property type="project" value="UniProtKB-KW"/>
</dbReference>
<dbReference type="GO" id="GO:0006782">
    <property type="term" value="P:protoporphyrinogen IX biosynthetic process"/>
    <property type="evidence" value="ECO:0007669"/>
    <property type="project" value="UniProtKB-UniPathway"/>
</dbReference>
<dbReference type="CDD" id="cd04823">
    <property type="entry name" value="ALAD_PBGS_aspartate_rich"/>
    <property type="match status" value="1"/>
</dbReference>
<dbReference type="FunFam" id="3.20.20.70:FF:000101">
    <property type="entry name" value="Delta-aminolevulinic acid dehydratase"/>
    <property type="match status" value="1"/>
</dbReference>
<dbReference type="Gene3D" id="3.20.20.70">
    <property type="entry name" value="Aldolase class I"/>
    <property type="match status" value="1"/>
</dbReference>
<dbReference type="InterPro" id="IPR001731">
    <property type="entry name" value="ALAD"/>
</dbReference>
<dbReference type="InterPro" id="IPR030656">
    <property type="entry name" value="ALAD_AS"/>
</dbReference>
<dbReference type="InterPro" id="IPR013785">
    <property type="entry name" value="Aldolase_TIM"/>
</dbReference>
<dbReference type="NCBIfam" id="NF006762">
    <property type="entry name" value="PRK09283.1"/>
    <property type="match status" value="1"/>
</dbReference>
<dbReference type="PANTHER" id="PTHR11458">
    <property type="entry name" value="DELTA-AMINOLEVULINIC ACID DEHYDRATASE"/>
    <property type="match status" value="1"/>
</dbReference>
<dbReference type="PANTHER" id="PTHR11458:SF0">
    <property type="entry name" value="DELTA-AMINOLEVULINIC ACID DEHYDRATASE"/>
    <property type="match status" value="1"/>
</dbReference>
<dbReference type="Pfam" id="PF00490">
    <property type="entry name" value="ALAD"/>
    <property type="match status" value="1"/>
</dbReference>
<dbReference type="PRINTS" id="PR00144">
    <property type="entry name" value="DALDHYDRTASE"/>
</dbReference>
<dbReference type="SMART" id="SM01004">
    <property type="entry name" value="ALAD"/>
    <property type="match status" value="1"/>
</dbReference>
<dbReference type="SUPFAM" id="SSF51569">
    <property type="entry name" value="Aldolase"/>
    <property type="match status" value="1"/>
</dbReference>
<dbReference type="PROSITE" id="PS00169">
    <property type="entry name" value="D_ALA_DEHYDRATASE"/>
    <property type="match status" value="1"/>
</dbReference>
<organism>
    <name type="scientific">Hordeum vulgare</name>
    <name type="common">Barley</name>
    <dbReference type="NCBI Taxonomy" id="4513"/>
    <lineage>
        <taxon>Eukaryota</taxon>
        <taxon>Viridiplantae</taxon>
        <taxon>Streptophyta</taxon>
        <taxon>Embryophyta</taxon>
        <taxon>Tracheophyta</taxon>
        <taxon>Spermatophyta</taxon>
        <taxon>Magnoliopsida</taxon>
        <taxon>Liliopsida</taxon>
        <taxon>Poales</taxon>
        <taxon>Poaceae</taxon>
        <taxon>BOP clade</taxon>
        <taxon>Pooideae</taxon>
        <taxon>Triticodae</taxon>
        <taxon>Triticeae</taxon>
        <taxon>Hordeinae</taxon>
        <taxon>Hordeum</taxon>
    </lineage>
</organism>
<name>HEM2_HORVU</name>
<gene>
    <name type="primary">HEMB</name>
    <name type="synonym">ALAD</name>
</gene>
<accession>Q42836</accession>
<proteinExistence type="evidence at transcript level"/>
<evidence type="ECO:0000250" key="1"/>
<evidence type="ECO:0000255" key="2"/>
<evidence type="ECO:0000305" key="3"/>
<protein>
    <recommendedName>
        <fullName>Delta-aminolevulinic acid dehydratase, chloroplastic</fullName>
        <shortName>ALADH</shortName>
        <ecNumber>4.2.1.24</ecNumber>
    </recommendedName>
    <alternativeName>
        <fullName>Porphobilinogen synthase</fullName>
    </alternativeName>
</protein>
<keyword id="KW-0021">Allosteric enzyme</keyword>
<keyword id="KW-0149">Chlorophyll biosynthesis</keyword>
<keyword id="KW-0150">Chloroplast</keyword>
<keyword id="KW-0350">Heme biosynthesis</keyword>
<keyword id="KW-0456">Lyase</keyword>
<keyword id="KW-0460">Magnesium</keyword>
<keyword id="KW-0479">Metal-binding</keyword>
<keyword id="KW-0934">Plastid</keyword>
<keyword id="KW-0627">Porphyrin biosynthesis</keyword>
<keyword id="KW-0809">Transit peptide</keyword>
<reference key="1">
    <citation type="submission" date="1995-10" db="EMBL/GenBank/DDBJ databases">
        <authorList>
            <person name="Bougri O."/>
        </authorList>
    </citation>
    <scope>NUCLEOTIDE SEQUENCE [MRNA]</scope>
    <source>
        <strain>cv. Bonus</strain>
    </source>
</reference>
<feature type="transit peptide" description="Chloroplast" evidence="2">
    <location>
        <begin position="1"/>
        <end status="unknown"/>
    </location>
</feature>
<feature type="chain" id="PRO_0000013316" description="Delta-aminolevulinic acid dehydratase, chloroplastic">
    <location>
        <begin status="unknown"/>
        <end position="428"/>
    </location>
</feature>
<feature type="active site" description="Schiff-base intermediate with substrate" evidence="1">
    <location>
        <position position="294"/>
    </location>
</feature>
<feature type="active site" description="Schiff-base intermediate with substrate" evidence="1">
    <location>
        <position position="347"/>
    </location>
</feature>
<feature type="binding site" evidence="1">
    <location>
        <position position="304"/>
    </location>
    <ligand>
        <name>5-aminolevulinate</name>
        <dbReference type="ChEBI" id="CHEBI:356416"/>
        <label>1</label>
    </ligand>
</feature>
<feature type="binding site" evidence="1">
    <location>
        <position position="316"/>
    </location>
    <ligand>
        <name>5-aminolevulinate</name>
        <dbReference type="ChEBI" id="CHEBI:356416"/>
        <label>1</label>
    </ligand>
</feature>
<feature type="binding site" evidence="1">
    <location>
        <position position="332"/>
    </location>
    <ligand>
        <name>Mg(2+)</name>
        <dbReference type="ChEBI" id="CHEBI:18420"/>
    </ligand>
</feature>
<feature type="binding site" evidence="1">
    <location>
        <position position="373"/>
    </location>
    <ligand>
        <name>5-aminolevulinate</name>
        <dbReference type="ChEBI" id="CHEBI:356416"/>
        <label>2</label>
    </ligand>
</feature>
<feature type="binding site" evidence="1">
    <location>
        <position position="412"/>
    </location>
    <ligand>
        <name>5-aminolevulinate</name>
        <dbReference type="ChEBI" id="CHEBI:356416"/>
        <label>2</label>
    </ligand>
</feature>
<sequence>MASTVPFSPAKVQMFQATNCHGHAGFGSSFAVPRTGPRPRSVAVRVSSEQEAAATVRAPSGRSIEECEADAVAGRFPAPSCVCQTPKAPDGTPEIRPLDMAKRPRRNRRSPALRAAFQETSISPANLVLPLFIHEGEEDAPIGAMPGCFRLGWQHGLLAEVYKARDVGVNSFVLFPKVPDALKSPTGVEAYNDNGLVPRTIRLLKDKFPDIIVYTDVALDPYSSDGHDGIVRKDGVILNDETVYQLCKQAVSQARAGADVVSPSNMMDGRVGAIRSALDAEGFNDVSIMSYTAKYASSFYGPFREALDSNPRFGDKKTYQMNPANYREALLETAADEAEGADILLVKPGLPYLDIIRLSRDNSALPIAAYQVSGEYSMIKAGGALNMIDEEKVMMESLMCLRRAGADVILTYFARQPPAVLCGMGTAK</sequence>
<comment type="function">
    <text evidence="1">Catalyzes an early step in the biosynthesis of tetrapyrroles. Binds two molecules of 5-aminolevulinate per subunit, each at a distinct site, and catalyzes their condensation to form porphobilinogen (By similarity).</text>
</comment>
<comment type="catalytic activity">
    <reaction>
        <text>2 5-aminolevulinate = porphobilinogen + 2 H2O + H(+)</text>
        <dbReference type="Rhea" id="RHEA:24064"/>
        <dbReference type="ChEBI" id="CHEBI:15377"/>
        <dbReference type="ChEBI" id="CHEBI:15378"/>
        <dbReference type="ChEBI" id="CHEBI:58126"/>
        <dbReference type="ChEBI" id="CHEBI:356416"/>
        <dbReference type="EC" id="4.2.1.24"/>
    </reaction>
</comment>
<comment type="cofactor">
    <cofactor evidence="1">
        <name>Mg(2+)</name>
        <dbReference type="ChEBI" id="CHEBI:18420"/>
    </cofactor>
    <text evidence="1">Binds 2 magnesium ions per monomer. The first magnesium ion is required for catalysis. The second functions as allosteric activator.</text>
</comment>
<comment type="pathway">
    <text>Porphyrin-containing compound metabolism; protoporphyrin-IX biosynthesis; coproporphyrinogen-III from 5-aminolevulinate: step 1/4.</text>
</comment>
<comment type="subunit">
    <text evidence="1">Homooctamer.</text>
</comment>
<comment type="subcellular location">
    <subcellularLocation>
        <location>Plastid</location>
        <location>Chloroplast</location>
    </subcellularLocation>
</comment>
<comment type="similarity">
    <text evidence="3">Belongs to the ALAD family.</text>
</comment>